<protein>
    <recommendedName>
        <fullName evidence="1">Serine--tRNA ligase</fullName>
        <ecNumber evidence="1">6.1.1.11</ecNumber>
    </recommendedName>
    <alternativeName>
        <fullName evidence="1">Seryl-tRNA synthetase</fullName>
        <shortName evidence="1">SerRS</shortName>
    </alternativeName>
    <alternativeName>
        <fullName evidence="1">Seryl-tRNA(Ser/Sec) synthetase</fullName>
    </alternativeName>
</protein>
<name>SYS_NAUPA</name>
<dbReference type="EC" id="6.1.1.11" evidence="1"/>
<dbReference type="EMBL" id="CP001279">
    <property type="protein sequence ID" value="ACM93722.1"/>
    <property type="molecule type" value="Genomic_DNA"/>
</dbReference>
<dbReference type="RefSeq" id="WP_015902774.1">
    <property type="nucleotide sequence ID" value="NC_012115.1"/>
</dbReference>
<dbReference type="SMR" id="B9L7B0"/>
<dbReference type="STRING" id="598659.NAMH_0077"/>
<dbReference type="KEGG" id="nam:NAMH_0077"/>
<dbReference type="eggNOG" id="COG0172">
    <property type="taxonomic scope" value="Bacteria"/>
</dbReference>
<dbReference type="HOGENOM" id="CLU_023797_1_1_7"/>
<dbReference type="OrthoDB" id="9804647at2"/>
<dbReference type="UniPathway" id="UPA00906">
    <property type="reaction ID" value="UER00895"/>
</dbReference>
<dbReference type="Proteomes" id="UP000000448">
    <property type="component" value="Chromosome"/>
</dbReference>
<dbReference type="GO" id="GO:0005737">
    <property type="term" value="C:cytoplasm"/>
    <property type="evidence" value="ECO:0007669"/>
    <property type="project" value="UniProtKB-SubCell"/>
</dbReference>
<dbReference type="GO" id="GO:0005524">
    <property type="term" value="F:ATP binding"/>
    <property type="evidence" value="ECO:0007669"/>
    <property type="project" value="UniProtKB-UniRule"/>
</dbReference>
<dbReference type="GO" id="GO:0004828">
    <property type="term" value="F:serine-tRNA ligase activity"/>
    <property type="evidence" value="ECO:0007669"/>
    <property type="project" value="UniProtKB-UniRule"/>
</dbReference>
<dbReference type="GO" id="GO:0016260">
    <property type="term" value="P:selenocysteine biosynthetic process"/>
    <property type="evidence" value="ECO:0007669"/>
    <property type="project" value="UniProtKB-UniRule"/>
</dbReference>
<dbReference type="GO" id="GO:0006434">
    <property type="term" value="P:seryl-tRNA aminoacylation"/>
    <property type="evidence" value="ECO:0007669"/>
    <property type="project" value="UniProtKB-UniRule"/>
</dbReference>
<dbReference type="CDD" id="cd00770">
    <property type="entry name" value="SerRS_core"/>
    <property type="match status" value="1"/>
</dbReference>
<dbReference type="Gene3D" id="3.30.930.10">
    <property type="entry name" value="Bira Bifunctional Protein, Domain 2"/>
    <property type="match status" value="1"/>
</dbReference>
<dbReference type="Gene3D" id="1.10.287.40">
    <property type="entry name" value="Serine-tRNA synthetase, tRNA binding domain"/>
    <property type="match status" value="1"/>
</dbReference>
<dbReference type="HAMAP" id="MF_00176">
    <property type="entry name" value="Ser_tRNA_synth_type1"/>
    <property type="match status" value="1"/>
</dbReference>
<dbReference type="InterPro" id="IPR002314">
    <property type="entry name" value="aa-tRNA-synt_IIb"/>
</dbReference>
<dbReference type="InterPro" id="IPR006195">
    <property type="entry name" value="aa-tRNA-synth_II"/>
</dbReference>
<dbReference type="InterPro" id="IPR045864">
    <property type="entry name" value="aa-tRNA-synth_II/BPL/LPL"/>
</dbReference>
<dbReference type="InterPro" id="IPR002317">
    <property type="entry name" value="Ser-tRNA-ligase_type_1"/>
</dbReference>
<dbReference type="InterPro" id="IPR015866">
    <property type="entry name" value="Ser-tRNA-synth_1_N"/>
</dbReference>
<dbReference type="InterPro" id="IPR042103">
    <property type="entry name" value="SerRS_1_N_sf"/>
</dbReference>
<dbReference type="InterPro" id="IPR033729">
    <property type="entry name" value="SerRS_core"/>
</dbReference>
<dbReference type="InterPro" id="IPR010978">
    <property type="entry name" value="tRNA-bd_arm"/>
</dbReference>
<dbReference type="NCBIfam" id="TIGR00414">
    <property type="entry name" value="serS"/>
    <property type="match status" value="1"/>
</dbReference>
<dbReference type="PANTHER" id="PTHR43697:SF1">
    <property type="entry name" value="SERINE--TRNA LIGASE"/>
    <property type="match status" value="1"/>
</dbReference>
<dbReference type="PANTHER" id="PTHR43697">
    <property type="entry name" value="SERYL-TRNA SYNTHETASE"/>
    <property type="match status" value="1"/>
</dbReference>
<dbReference type="Pfam" id="PF02403">
    <property type="entry name" value="Seryl_tRNA_N"/>
    <property type="match status" value="1"/>
</dbReference>
<dbReference type="Pfam" id="PF00587">
    <property type="entry name" value="tRNA-synt_2b"/>
    <property type="match status" value="1"/>
</dbReference>
<dbReference type="PIRSF" id="PIRSF001529">
    <property type="entry name" value="Ser-tRNA-synth_IIa"/>
    <property type="match status" value="1"/>
</dbReference>
<dbReference type="PRINTS" id="PR00981">
    <property type="entry name" value="TRNASYNTHSER"/>
</dbReference>
<dbReference type="SUPFAM" id="SSF55681">
    <property type="entry name" value="Class II aaRS and biotin synthetases"/>
    <property type="match status" value="1"/>
</dbReference>
<dbReference type="SUPFAM" id="SSF46589">
    <property type="entry name" value="tRNA-binding arm"/>
    <property type="match status" value="1"/>
</dbReference>
<dbReference type="PROSITE" id="PS50862">
    <property type="entry name" value="AA_TRNA_LIGASE_II"/>
    <property type="match status" value="1"/>
</dbReference>
<evidence type="ECO:0000255" key="1">
    <source>
        <dbReference type="HAMAP-Rule" id="MF_00176"/>
    </source>
</evidence>
<reference key="1">
    <citation type="journal article" date="2009" name="PLoS Genet.">
        <title>Adaptations to submarine hydrothermal environments exemplified by the genome of Nautilia profundicola.</title>
        <authorList>
            <person name="Campbell B.J."/>
            <person name="Smith J.L."/>
            <person name="Hanson T.E."/>
            <person name="Klotz M.G."/>
            <person name="Stein L.Y."/>
            <person name="Lee C.K."/>
            <person name="Wu D."/>
            <person name="Robinson J.M."/>
            <person name="Khouri H.M."/>
            <person name="Eisen J.A."/>
            <person name="Cary S.C."/>
        </authorList>
    </citation>
    <scope>NUCLEOTIDE SEQUENCE [LARGE SCALE GENOMIC DNA]</scope>
    <source>
        <strain>ATCC BAA-1463 / DSM 18972 / AmH</strain>
    </source>
</reference>
<comment type="function">
    <text evidence="1">Catalyzes the attachment of serine to tRNA(Ser). Is also able to aminoacylate tRNA(Sec) with serine, to form the misacylated tRNA L-seryl-tRNA(Sec), which will be further converted into selenocysteinyl-tRNA(Sec).</text>
</comment>
<comment type="catalytic activity">
    <reaction evidence="1">
        <text>tRNA(Ser) + L-serine + ATP = L-seryl-tRNA(Ser) + AMP + diphosphate + H(+)</text>
        <dbReference type="Rhea" id="RHEA:12292"/>
        <dbReference type="Rhea" id="RHEA-COMP:9669"/>
        <dbReference type="Rhea" id="RHEA-COMP:9703"/>
        <dbReference type="ChEBI" id="CHEBI:15378"/>
        <dbReference type="ChEBI" id="CHEBI:30616"/>
        <dbReference type="ChEBI" id="CHEBI:33019"/>
        <dbReference type="ChEBI" id="CHEBI:33384"/>
        <dbReference type="ChEBI" id="CHEBI:78442"/>
        <dbReference type="ChEBI" id="CHEBI:78533"/>
        <dbReference type="ChEBI" id="CHEBI:456215"/>
        <dbReference type="EC" id="6.1.1.11"/>
    </reaction>
</comment>
<comment type="catalytic activity">
    <reaction evidence="1">
        <text>tRNA(Sec) + L-serine + ATP = L-seryl-tRNA(Sec) + AMP + diphosphate + H(+)</text>
        <dbReference type="Rhea" id="RHEA:42580"/>
        <dbReference type="Rhea" id="RHEA-COMP:9742"/>
        <dbReference type="Rhea" id="RHEA-COMP:10128"/>
        <dbReference type="ChEBI" id="CHEBI:15378"/>
        <dbReference type="ChEBI" id="CHEBI:30616"/>
        <dbReference type="ChEBI" id="CHEBI:33019"/>
        <dbReference type="ChEBI" id="CHEBI:33384"/>
        <dbReference type="ChEBI" id="CHEBI:78442"/>
        <dbReference type="ChEBI" id="CHEBI:78533"/>
        <dbReference type="ChEBI" id="CHEBI:456215"/>
        <dbReference type="EC" id="6.1.1.11"/>
    </reaction>
</comment>
<comment type="pathway">
    <text evidence="1">Aminoacyl-tRNA biosynthesis; selenocysteinyl-tRNA(Sec) biosynthesis; L-seryl-tRNA(Sec) from L-serine and tRNA(Sec): step 1/1.</text>
</comment>
<comment type="subunit">
    <text evidence="1">Homodimer. The tRNA molecule binds across the dimer.</text>
</comment>
<comment type="subcellular location">
    <subcellularLocation>
        <location evidence="1">Cytoplasm</location>
    </subcellularLocation>
</comment>
<comment type="domain">
    <text evidence="1">Consists of two distinct domains, a catalytic core and a N-terminal extension that is involved in tRNA binding.</text>
</comment>
<comment type="similarity">
    <text evidence="1">Belongs to the class-II aminoacyl-tRNA synthetase family. Type-1 seryl-tRNA synthetase subfamily.</text>
</comment>
<accession>B9L7B0</accession>
<feature type="chain" id="PRO_1000199496" description="Serine--tRNA ligase">
    <location>
        <begin position="1"/>
        <end position="416"/>
    </location>
</feature>
<feature type="binding site" evidence="1">
    <location>
        <begin position="232"/>
        <end position="234"/>
    </location>
    <ligand>
        <name>L-serine</name>
        <dbReference type="ChEBI" id="CHEBI:33384"/>
    </ligand>
</feature>
<feature type="binding site" evidence="1">
    <location>
        <begin position="263"/>
        <end position="265"/>
    </location>
    <ligand>
        <name>ATP</name>
        <dbReference type="ChEBI" id="CHEBI:30616"/>
    </ligand>
</feature>
<feature type="binding site" evidence="1">
    <location>
        <position position="286"/>
    </location>
    <ligand>
        <name>L-serine</name>
        <dbReference type="ChEBI" id="CHEBI:33384"/>
    </ligand>
</feature>
<feature type="binding site" evidence="1">
    <location>
        <begin position="350"/>
        <end position="353"/>
    </location>
    <ligand>
        <name>ATP</name>
        <dbReference type="ChEBI" id="CHEBI:30616"/>
    </ligand>
</feature>
<feature type="binding site" evidence="1">
    <location>
        <position position="384"/>
    </location>
    <ligand>
        <name>L-serine</name>
        <dbReference type="ChEBI" id="CHEBI:33384"/>
    </ligand>
</feature>
<gene>
    <name evidence="1" type="primary">serS</name>
    <name type="ordered locus">NAMH_0077</name>
</gene>
<proteinExistence type="inferred from homology"/>
<keyword id="KW-0030">Aminoacyl-tRNA synthetase</keyword>
<keyword id="KW-0067">ATP-binding</keyword>
<keyword id="KW-0963">Cytoplasm</keyword>
<keyword id="KW-0436">Ligase</keyword>
<keyword id="KW-0547">Nucleotide-binding</keyword>
<keyword id="KW-0648">Protein biosynthesis</keyword>
<sequence>MIDLKLLEKDFENVSKRLKLKGVDENNLEEIKKLFKEKKEIKTTLDKLLEQRNILSKQIGNFMKNGEKDKAEEIKKEVNSLKEEISVLEEKLKTIEDSLLQKALVIPNIPDEDVPIGKDEDENVEIKRVGEIPTFDFEPKPHDELGEKLDWLDFTRGVKLAKSRFTVMKKDAARLERALINFFLDHNREWGFEEVYVPFMVNRETMTGTGQLPKFEEDLFKIENEELYLIPTAEVPLTNLFRDEIITNLDEPIKLTAYTPCFRKEAGSYGKDTKGIIRQHQFDKVELVAITKPEDSDKMFDEMVACASNALEKLGLPYRQLMLCTGDLGFSAAKTIDLEVWIPSQNKYREISSVSNTRDFQARRAKIRYKDGKKNKLVHTLNGSSLAVGRTLVAIMENYQTKDGNIQIPEALKKYL</sequence>
<organism>
    <name type="scientific">Nautilia profundicola (strain ATCC BAA-1463 / DSM 18972 / AmH)</name>
    <dbReference type="NCBI Taxonomy" id="598659"/>
    <lineage>
        <taxon>Bacteria</taxon>
        <taxon>Pseudomonadati</taxon>
        <taxon>Campylobacterota</taxon>
        <taxon>Epsilonproteobacteria</taxon>
        <taxon>Nautiliales</taxon>
        <taxon>Nautiliaceae</taxon>
        <taxon>Nautilia</taxon>
    </lineage>
</organism>